<organism>
    <name type="scientific">Limosilactobacillus reuteri (strain DSM 20016)</name>
    <name type="common">Lactobacillus reuteri</name>
    <dbReference type="NCBI Taxonomy" id="557436"/>
    <lineage>
        <taxon>Bacteria</taxon>
        <taxon>Bacillati</taxon>
        <taxon>Bacillota</taxon>
        <taxon>Bacilli</taxon>
        <taxon>Lactobacillales</taxon>
        <taxon>Lactobacillaceae</taxon>
        <taxon>Limosilactobacillus</taxon>
    </lineage>
</organism>
<evidence type="ECO:0000255" key="1">
    <source>
        <dbReference type="HAMAP-Rule" id="MF_00382"/>
    </source>
</evidence>
<evidence type="ECO:0000305" key="2"/>
<proteinExistence type="inferred from homology"/>
<comment type="function">
    <text evidence="1">Binds directly to 23S ribosomal RNA and is necessary for the in vitro assembly process of the 50S ribosomal subunit. It is not involved in the protein synthesizing functions of that subunit.</text>
</comment>
<comment type="similarity">
    <text evidence="1">Belongs to the bacterial ribosomal protein bL20 family.</text>
</comment>
<feature type="chain" id="PRO_0000355469" description="Large ribosomal subunit protein bL20">
    <location>
        <begin position="1"/>
        <end position="117"/>
    </location>
</feature>
<dbReference type="EMBL" id="CP000705">
    <property type="protein sequence ID" value="ABQ83496.1"/>
    <property type="molecule type" value="Genomic_DNA"/>
</dbReference>
<dbReference type="RefSeq" id="WP_003668485.1">
    <property type="nucleotide sequence ID" value="NC_009513.1"/>
</dbReference>
<dbReference type="SMR" id="A5VKX2"/>
<dbReference type="STRING" id="557436.Lreu_1239"/>
<dbReference type="DNASU" id="5188364"/>
<dbReference type="KEGG" id="lre:Lreu_1239"/>
<dbReference type="PATRIC" id="fig|557436.17.peg.107"/>
<dbReference type="eggNOG" id="COG0292">
    <property type="taxonomic scope" value="Bacteria"/>
</dbReference>
<dbReference type="HOGENOM" id="CLU_123265_0_1_9"/>
<dbReference type="OMA" id="GRRKNVW"/>
<dbReference type="Proteomes" id="UP000001991">
    <property type="component" value="Chromosome"/>
</dbReference>
<dbReference type="GO" id="GO:1990904">
    <property type="term" value="C:ribonucleoprotein complex"/>
    <property type="evidence" value="ECO:0007669"/>
    <property type="project" value="UniProtKB-KW"/>
</dbReference>
<dbReference type="GO" id="GO:0005840">
    <property type="term" value="C:ribosome"/>
    <property type="evidence" value="ECO:0007669"/>
    <property type="project" value="UniProtKB-KW"/>
</dbReference>
<dbReference type="GO" id="GO:0019843">
    <property type="term" value="F:rRNA binding"/>
    <property type="evidence" value="ECO:0007669"/>
    <property type="project" value="UniProtKB-UniRule"/>
</dbReference>
<dbReference type="GO" id="GO:0003735">
    <property type="term" value="F:structural constituent of ribosome"/>
    <property type="evidence" value="ECO:0007669"/>
    <property type="project" value="InterPro"/>
</dbReference>
<dbReference type="GO" id="GO:0000027">
    <property type="term" value="P:ribosomal large subunit assembly"/>
    <property type="evidence" value="ECO:0007669"/>
    <property type="project" value="UniProtKB-UniRule"/>
</dbReference>
<dbReference type="GO" id="GO:0006412">
    <property type="term" value="P:translation"/>
    <property type="evidence" value="ECO:0007669"/>
    <property type="project" value="InterPro"/>
</dbReference>
<dbReference type="CDD" id="cd07026">
    <property type="entry name" value="Ribosomal_L20"/>
    <property type="match status" value="1"/>
</dbReference>
<dbReference type="FunFam" id="1.10.1900.20:FF:000001">
    <property type="entry name" value="50S ribosomal protein L20"/>
    <property type="match status" value="1"/>
</dbReference>
<dbReference type="Gene3D" id="6.10.160.10">
    <property type="match status" value="1"/>
</dbReference>
<dbReference type="Gene3D" id="1.10.1900.20">
    <property type="entry name" value="Ribosomal protein L20"/>
    <property type="match status" value="1"/>
</dbReference>
<dbReference type="HAMAP" id="MF_00382">
    <property type="entry name" value="Ribosomal_bL20"/>
    <property type="match status" value="1"/>
</dbReference>
<dbReference type="InterPro" id="IPR005813">
    <property type="entry name" value="Ribosomal_bL20"/>
</dbReference>
<dbReference type="InterPro" id="IPR049946">
    <property type="entry name" value="RIBOSOMAL_L20_CS"/>
</dbReference>
<dbReference type="InterPro" id="IPR035566">
    <property type="entry name" value="Ribosomal_protein_bL20_C"/>
</dbReference>
<dbReference type="NCBIfam" id="TIGR01032">
    <property type="entry name" value="rplT_bact"/>
    <property type="match status" value="1"/>
</dbReference>
<dbReference type="PANTHER" id="PTHR10986">
    <property type="entry name" value="39S RIBOSOMAL PROTEIN L20"/>
    <property type="match status" value="1"/>
</dbReference>
<dbReference type="Pfam" id="PF00453">
    <property type="entry name" value="Ribosomal_L20"/>
    <property type="match status" value="1"/>
</dbReference>
<dbReference type="PRINTS" id="PR00062">
    <property type="entry name" value="RIBOSOMALL20"/>
</dbReference>
<dbReference type="SUPFAM" id="SSF74731">
    <property type="entry name" value="Ribosomal protein L20"/>
    <property type="match status" value="1"/>
</dbReference>
<dbReference type="PROSITE" id="PS00937">
    <property type="entry name" value="RIBOSOMAL_L20"/>
    <property type="match status" value="1"/>
</dbReference>
<gene>
    <name evidence="1" type="primary">rplT</name>
    <name type="ordered locus">Lreu_1239</name>
</gene>
<reference key="1">
    <citation type="journal article" date="2011" name="PLoS Genet.">
        <title>The evolution of host specialization in the vertebrate gut symbiont Lactobacillus reuteri.</title>
        <authorList>
            <person name="Frese S.A."/>
            <person name="Benson A.K."/>
            <person name="Tannock G.W."/>
            <person name="Loach D.M."/>
            <person name="Kim J."/>
            <person name="Zhang M."/>
            <person name="Oh P.L."/>
            <person name="Heng N.C."/>
            <person name="Patil P.B."/>
            <person name="Juge N."/>
            <person name="Mackenzie D.A."/>
            <person name="Pearson B.M."/>
            <person name="Lapidus A."/>
            <person name="Dalin E."/>
            <person name="Tice H."/>
            <person name="Goltsman E."/>
            <person name="Land M."/>
            <person name="Hauser L."/>
            <person name="Ivanova N."/>
            <person name="Kyrpides N.C."/>
            <person name="Walter J."/>
        </authorList>
    </citation>
    <scope>NUCLEOTIDE SEQUENCE [LARGE SCALE GENOMIC DNA]</scope>
    <source>
        <strain>DSM 20016</strain>
    </source>
</reference>
<sequence>MRVKGGTVTRARRKRIMKLAKGYRGSKHRLFKTAKDQVMKSYAYAFRDRKVNKRKFRELWIARINAAARMNDISYSKLMHGLKVANIDINRKMLADLAVNDADAFKALVDEAKKALN</sequence>
<accession>A5VKX2</accession>
<protein>
    <recommendedName>
        <fullName evidence="1">Large ribosomal subunit protein bL20</fullName>
    </recommendedName>
    <alternativeName>
        <fullName evidence="2">50S ribosomal protein L20</fullName>
    </alternativeName>
</protein>
<name>RL20_LIMRD</name>
<keyword id="KW-1185">Reference proteome</keyword>
<keyword id="KW-0687">Ribonucleoprotein</keyword>
<keyword id="KW-0689">Ribosomal protein</keyword>
<keyword id="KW-0694">RNA-binding</keyword>
<keyword id="KW-0699">rRNA-binding</keyword>